<proteinExistence type="inferred from homology"/>
<feature type="signal peptide" evidence="2">
    <location>
        <begin position="1"/>
        <end position="20"/>
    </location>
</feature>
<feature type="propeptide" id="PRO_0000415016" evidence="8">
    <location>
        <begin position="21"/>
        <end position="48"/>
    </location>
</feature>
<feature type="peptide" id="PRO_0000415017" description="Conotoxin Cl14.2b" evidence="7">
    <location>
        <begin position="51"/>
        <end position="67"/>
    </location>
</feature>
<evidence type="ECO:0000250" key="1"/>
<evidence type="ECO:0000255" key="2"/>
<evidence type="ECO:0000269" key="3">
    <source>
    </source>
</evidence>
<evidence type="ECO:0000303" key="4">
    <source>
    </source>
</evidence>
<evidence type="ECO:0000303" key="5">
    <source>
    </source>
</evidence>
<evidence type="ECO:0000305" key="6"/>
<evidence type="ECO:0000305" key="7">
    <source>
    </source>
</evidence>
<evidence type="ECO:0000305" key="8">
    <source>
    </source>
</evidence>
<dbReference type="EMBL" id="FJ959132">
    <property type="protein sequence ID" value="ADB93102.1"/>
    <property type="molecule type" value="Genomic_DNA"/>
</dbReference>
<dbReference type="ConoServer" id="4018">
    <property type="toxin name" value="Cal14.2b precursor"/>
</dbReference>
<dbReference type="GO" id="GO:0005576">
    <property type="term" value="C:extracellular region"/>
    <property type="evidence" value="ECO:0007669"/>
    <property type="project" value="UniProtKB-SubCell"/>
</dbReference>
<dbReference type="GO" id="GO:0090729">
    <property type="term" value="F:toxin activity"/>
    <property type="evidence" value="ECO:0007669"/>
    <property type="project" value="UniProtKB-KW"/>
</dbReference>
<reference key="1">
    <citation type="journal article" date="2010" name="Mol. Phylogenet. Evol.">
        <title>Evolution of Conus peptide toxins: analysis of Conus californicus Reeve, 1844.</title>
        <authorList>
            <person name="Biggs J.S."/>
            <person name="Watkins M."/>
            <person name="Puillandre N."/>
            <person name="Ownby J.P."/>
            <person name="Lopez-Vera E."/>
            <person name="Christensen S."/>
            <person name="Moreno K.J."/>
            <person name="Bernaldez J."/>
            <person name="Licea-Navarro A."/>
            <person name="Corneli P.S."/>
            <person name="Olivera B.M."/>
        </authorList>
    </citation>
    <scope>NUCLEOTIDE SEQUENCE [GENOMIC DNA]</scope>
</reference>
<reference key="2">
    <citation type="journal article" date="2021" name="Biomedicines">
        <title>Potential therapeutic applications of synthetic conotoxin s-Cal14.2b, derived from Californiconus californicus, for treating type 2 diabetes.</title>
        <authorList>
            <person name="Lugo-Fabres P.H."/>
            <person name="Otero-Sastre L.M."/>
            <person name="Bernaldez-Sarabia J."/>
            <person name="Camacho-Villegas T.A."/>
            <person name="Sanchez-Campos N."/>
            <person name="Serrano-Bello J."/>
            <person name="Medina L.A."/>
            <person name="Muniz-Hernandez S."/>
            <person name="de la Cruz L."/>
            <person name="Arenas I."/>
            <person name="Barajas-Martinez A."/>
            <person name="Garcia D.E."/>
            <person name="Nunez-Garcia L."/>
            <person name="Gonzalez-Canudas J."/>
            <person name="Licea-Navarro A.F."/>
        </authorList>
    </citation>
    <scope>FUNCTION</scope>
    <scope>SYNTHESIS OF 51-67</scope>
</reference>
<comment type="function">
    <text evidence="3">Increases calcium current amplitude through Cav1.2/Cav1.3 channels in rat pancreatic beta-cells, which is a prerequisite for eliciting insulin secretion. Stimulates insulin secretion in NIT-1 insulinoma cell lines. In vivo, significantly decreases mice blood glucose levels as of 45 minutes after treatment, similarly to insulin treatment. Has a potential therapeutic use in endocrinal pathologies such as early stages of type 2 diabetes where the pancreas's capability to produce insulin is still effective.</text>
</comment>
<comment type="subcellular location">
    <subcellularLocation>
        <location evidence="8">Secreted</location>
    </subcellularLocation>
</comment>
<comment type="tissue specificity">
    <text evidence="8">Expressed by the venom duct.</text>
</comment>
<comment type="domain">
    <text evidence="6">The cysteine framework is XIV (C-C-C-C).</text>
</comment>
<comment type="PTM">
    <text evidence="1">Contains 2 disulfide bonds.</text>
</comment>
<comment type="similarity">
    <text evidence="6">Belongs to the conotoxin L superfamily.</text>
</comment>
<keyword id="KW-0165">Cleavage on pair of basic residues</keyword>
<keyword id="KW-1015">Disulfide bond</keyword>
<keyword id="KW-0528">Neurotoxin</keyword>
<keyword id="KW-0964">Secreted</keyword>
<keyword id="KW-0732">Signal</keyword>
<keyword id="KW-0800">Toxin</keyword>
<organism>
    <name type="scientific">Californiconus californicus</name>
    <name type="common">California cone</name>
    <name type="synonym">Conus californicus</name>
    <dbReference type="NCBI Taxonomy" id="1736779"/>
    <lineage>
        <taxon>Eukaryota</taxon>
        <taxon>Metazoa</taxon>
        <taxon>Spiralia</taxon>
        <taxon>Lophotrochozoa</taxon>
        <taxon>Mollusca</taxon>
        <taxon>Gastropoda</taxon>
        <taxon>Caenogastropoda</taxon>
        <taxon>Neogastropoda</taxon>
        <taxon>Conoidea</taxon>
        <taxon>Conidae</taxon>
        <taxon>Californiconus</taxon>
    </lineage>
</organism>
<protein>
    <recommendedName>
        <fullName evidence="4">Conotoxin Cl14.2b</fullName>
    </recommendedName>
    <alternativeName>
        <fullName evidence="5">Cal14.2b</fullName>
    </alternativeName>
</protein>
<name>CLE2B_CONCL</name>
<accession>D6C4J0</accession>
<sequence>MNVTVMFLVLLLLTMPLTDGFNIRATNGGELFGPVQRDAGNVLDHGFQRRRECPPRCPTSHCNAGTC</sequence>